<dbReference type="EMBL" id="CP000563">
    <property type="protein sequence ID" value="ABN63466.1"/>
    <property type="molecule type" value="Genomic_DNA"/>
</dbReference>
<dbReference type="RefSeq" id="WP_006083426.1">
    <property type="nucleotide sequence ID" value="NC_009052.1"/>
</dbReference>
<dbReference type="SMR" id="A3D9Q3"/>
<dbReference type="STRING" id="325240.Sbal_3998"/>
<dbReference type="GeneID" id="11774085"/>
<dbReference type="KEGG" id="sbl:Sbal_3998"/>
<dbReference type="HOGENOM" id="CLU_080880_3_0_6"/>
<dbReference type="OrthoDB" id="285675at2"/>
<dbReference type="Proteomes" id="UP000001557">
    <property type="component" value="Chromosome"/>
</dbReference>
<dbReference type="GO" id="GO:0005829">
    <property type="term" value="C:cytosol"/>
    <property type="evidence" value="ECO:0007669"/>
    <property type="project" value="TreeGrafter"/>
</dbReference>
<dbReference type="GO" id="GO:0008199">
    <property type="term" value="F:ferric iron binding"/>
    <property type="evidence" value="ECO:0007669"/>
    <property type="project" value="InterPro"/>
</dbReference>
<dbReference type="GO" id="GO:0008198">
    <property type="term" value="F:ferrous iron binding"/>
    <property type="evidence" value="ECO:0007669"/>
    <property type="project" value="TreeGrafter"/>
</dbReference>
<dbReference type="GO" id="GO:0016226">
    <property type="term" value="P:iron-sulfur cluster assembly"/>
    <property type="evidence" value="ECO:0007669"/>
    <property type="project" value="UniProtKB-UniRule"/>
</dbReference>
<dbReference type="CDD" id="cd00503">
    <property type="entry name" value="Frataxin"/>
    <property type="match status" value="1"/>
</dbReference>
<dbReference type="FunFam" id="3.30.920.10:FF:000005">
    <property type="entry name" value="Iron-sulfur cluster assembly protein CyaY"/>
    <property type="match status" value="1"/>
</dbReference>
<dbReference type="Gene3D" id="3.30.920.10">
    <property type="entry name" value="Frataxin/CyaY"/>
    <property type="match status" value="1"/>
</dbReference>
<dbReference type="HAMAP" id="MF_00142">
    <property type="entry name" value="CyaY"/>
    <property type="match status" value="1"/>
</dbReference>
<dbReference type="InterPro" id="IPR047584">
    <property type="entry name" value="CyaY"/>
</dbReference>
<dbReference type="InterPro" id="IPR002908">
    <property type="entry name" value="Frataxin/CyaY"/>
</dbReference>
<dbReference type="InterPro" id="IPR036524">
    <property type="entry name" value="Frataxin/CyaY_sf"/>
</dbReference>
<dbReference type="InterPro" id="IPR020895">
    <property type="entry name" value="Frataxin_CS"/>
</dbReference>
<dbReference type="NCBIfam" id="TIGR03421">
    <property type="entry name" value="FeS_CyaY"/>
    <property type="match status" value="1"/>
</dbReference>
<dbReference type="PANTHER" id="PTHR16821">
    <property type="entry name" value="FRATAXIN"/>
    <property type="match status" value="1"/>
</dbReference>
<dbReference type="PANTHER" id="PTHR16821:SF2">
    <property type="entry name" value="FRATAXIN, MITOCHONDRIAL"/>
    <property type="match status" value="1"/>
</dbReference>
<dbReference type="Pfam" id="PF01491">
    <property type="entry name" value="Frataxin_Cyay"/>
    <property type="match status" value="1"/>
</dbReference>
<dbReference type="SMART" id="SM01219">
    <property type="entry name" value="Frataxin_Cyay"/>
    <property type="match status" value="1"/>
</dbReference>
<dbReference type="SUPFAM" id="SSF55387">
    <property type="entry name" value="Frataxin/Nqo15-like"/>
    <property type="match status" value="1"/>
</dbReference>
<dbReference type="PROSITE" id="PS01344">
    <property type="entry name" value="FRATAXIN_1"/>
    <property type="match status" value="1"/>
</dbReference>
<dbReference type="PROSITE" id="PS50810">
    <property type="entry name" value="FRATAXIN_2"/>
    <property type="match status" value="1"/>
</dbReference>
<accession>A3D9Q3</accession>
<keyword id="KW-0408">Iron</keyword>
<keyword id="KW-0479">Metal-binding</keyword>
<keyword id="KW-1185">Reference proteome</keyword>
<organism>
    <name type="scientific">Shewanella baltica (strain OS155 / ATCC BAA-1091)</name>
    <dbReference type="NCBI Taxonomy" id="325240"/>
    <lineage>
        <taxon>Bacteria</taxon>
        <taxon>Pseudomonadati</taxon>
        <taxon>Pseudomonadota</taxon>
        <taxon>Gammaproteobacteria</taxon>
        <taxon>Alteromonadales</taxon>
        <taxon>Shewanellaceae</taxon>
        <taxon>Shewanella</taxon>
    </lineage>
</organism>
<evidence type="ECO:0000255" key="1">
    <source>
        <dbReference type="HAMAP-Rule" id="MF_00142"/>
    </source>
</evidence>
<proteinExistence type="inferred from homology"/>
<gene>
    <name evidence="1" type="primary">cyaY</name>
    <name type="ordered locus">Sbal_3998</name>
</gene>
<reference key="1">
    <citation type="submission" date="2007-02" db="EMBL/GenBank/DDBJ databases">
        <title>Complete sequence of chromosome of Shewanella baltica OS155.</title>
        <authorList>
            <consortium name="US DOE Joint Genome Institute"/>
            <person name="Copeland A."/>
            <person name="Lucas S."/>
            <person name="Lapidus A."/>
            <person name="Barry K."/>
            <person name="Detter J.C."/>
            <person name="Glavina del Rio T."/>
            <person name="Hammon N."/>
            <person name="Israni S."/>
            <person name="Dalin E."/>
            <person name="Tice H."/>
            <person name="Pitluck S."/>
            <person name="Sims D.R."/>
            <person name="Brettin T."/>
            <person name="Bruce D."/>
            <person name="Han C."/>
            <person name="Tapia R."/>
            <person name="Brainard J."/>
            <person name="Schmutz J."/>
            <person name="Larimer F."/>
            <person name="Land M."/>
            <person name="Hauser L."/>
            <person name="Kyrpides N."/>
            <person name="Mikhailova N."/>
            <person name="Brettar I."/>
            <person name="Klappenbach J."/>
            <person name="Konstantinidis K."/>
            <person name="Rodrigues J."/>
            <person name="Tiedje J."/>
            <person name="Richardson P."/>
        </authorList>
    </citation>
    <scope>NUCLEOTIDE SEQUENCE [LARGE SCALE GENOMIC DNA]</scope>
    <source>
        <strain>OS155 / ATCC BAA-1091</strain>
    </source>
</reference>
<feature type="chain" id="PRO_1000010953" description="Iron-sulfur cluster assembly protein CyaY">
    <location>
        <begin position="1"/>
        <end position="109"/>
    </location>
</feature>
<comment type="function">
    <text evidence="1">Involved in iron-sulfur (Fe-S) cluster assembly. May act as a regulator of Fe-S biogenesis.</text>
</comment>
<comment type="similarity">
    <text evidence="1">Belongs to the frataxin family.</text>
</comment>
<sequence>MAITDTEFHQLADDMFQAIENAIETAIDEQDADVDIDASGNVLQLEFVDGSKIVINKQEPLHEIWVATRFGGYHFGFVEGKWMDGRNGGEFMPFVQESIERQGGIKLSF</sequence>
<name>CYAY_SHEB5</name>
<protein>
    <recommendedName>
        <fullName evidence="1">Iron-sulfur cluster assembly protein CyaY</fullName>
    </recommendedName>
</protein>